<evidence type="ECO:0000250" key="1">
    <source>
        <dbReference type="UniProtKB" id="P00730"/>
    </source>
</evidence>
<evidence type="ECO:0000250" key="2">
    <source>
        <dbReference type="UniProtKB" id="P15085"/>
    </source>
</evidence>
<evidence type="ECO:0000250" key="3">
    <source>
        <dbReference type="UniProtKB" id="P38836"/>
    </source>
</evidence>
<evidence type="ECO:0000255" key="4"/>
<evidence type="ECO:0000255" key="5">
    <source>
        <dbReference type="PROSITE-ProRule" id="PRU01379"/>
    </source>
</evidence>
<evidence type="ECO:0000256" key="6">
    <source>
        <dbReference type="SAM" id="MobiDB-lite"/>
    </source>
</evidence>
<evidence type="ECO:0000305" key="7"/>
<name>ECM14_AJECN</name>
<proteinExistence type="inferred from homology"/>
<reference key="1">
    <citation type="journal article" date="2009" name="Genome Res.">
        <title>Comparative genomic analyses of the human fungal pathogens Coccidioides and their relatives.</title>
        <authorList>
            <person name="Sharpton T.J."/>
            <person name="Stajich J.E."/>
            <person name="Rounsley S.D."/>
            <person name="Gardner M.J."/>
            <person name="Wortman J.R."/>
            <person name="Jordar V.S."/>
            <person name="Maiti R."/>
            <person name="Kodira C.D."/>
            <person name="Neafsey D.E."/>
            <person name="Zeng Q."/>
            <person name="Hung C.-Y."/>
            <person name="McMahan C."/>
            <person name="Muszewska A."/>
            <person name="Grynberg M."/>
            <person name="Mandel M.A."/>
            <person name="Kellner E.M."/>
            <person name="Barker B.M."/>
            <person name="Galgiani J.N."/>
            <person name="Orbach M.J."/>
            <person name="Kirkland T.N."/>
            <person name="Cole G.T."/>
            <person name="Henn M.R."/>
            <person name="Birren B.W."/>
            <person name="Taylor J.W."/>
        </authorList>
    </citation>
    <scope>NUCLEOTIDE SEQUENCE [LARGE SCALE GENOMIC DNA]</scope>
    <source>
        <strain>NAm1 / WU24</strain>
    </source>
</reference>
<dbReference type="EMBL" id="CH476662">
    <property type="protein sequence ID" value="EDN10852.1"/>
    <property type="molecule type" value="Genomic_DNA"/>
</dbReference>
<dbReference type="SMR" id="A6RCF5"/>
<dbReference type="STRING" id="339724.A6RCF5"/>
<dbReference type="GlyCosmos" id="A6RCF5">
    <property type="glycosylation" value="1 site, No reported glycans"/>
</dbReference>
<dbReference type="KEGG" id="aje:HCAG_07313"/>
<dbReference type="VEuPathDB" id="FungiDB:HCAG_07313"/>
<dbReference type="HOGENOM" id="CLU_019326_1_0_1"/>
<dbReference type="OMA" id="WFYHQLH"/>
<dbReference type="OrthoDB" id="2221at299071"/>
<dbReference type="Proteomes" id="UP000009297">
    <property type="component" value="Unassembled WGS sequence"/>
</dbReference>
<dbReference type="GO" id="GO:0005576">
    <property type="term" value="C:extracellular region"/>
    <property type="evidence" value="ECO:0007669"/>
    <property type="project" value="UniProtKB-SubCell"/>
</dbReference>
<dbReference type="GO" id="GO:0005773">
    <property type="term" value="C:vacuole"/>
    <property type="evidence" value="ECO:0007669"/>
    <property type="project" value="UniProtKB-SubCell"/>
</dbReference>
<dbReference type="GO" id="GO:0008270">
    <property type="term" value="F:zinc ion binding"/>
    <property type="evidence" value="ECO:0007669"/>
    <property type="project" value="InterPro"/>
</dbReference>
<dbReference type="GO" id="GO:0071555">
    <property type="term" value="P:cell wall organization"/>
    <property type="evidence" value="ECO:0007669"/>
    <property type="project" value="UniProtKB-KW"/>
</dbReference>
<dbReference type="GO" id="GO:0006508">
    <property type="term" value="P:proteolysis"/>
    <property type="evidence" value="ECO:0007669"/>
    <property type="project" value="InterPro"/>
</dbReference>
<dbReference type="CDD" id="cd03860">
    <property type="entry name" value="M14_CP_A-B_like"/>
    <property type="match status" value="1"/>
</dbReference>
<dbReference type="FunFam" id="3.40.630.10:FF:000060">
    <property type="entry name" value="Putative metallocarboxypeptidase ecm14"/>
    <property type="match status" value="1"/>
</dbReference>
<dbReference type="Gene3D" id="3.40.630.10">
    <property type="entry name" value="Zn peptidases"/>
    <property type="match status" value="1"/>
</dbReference>
<dbReference type="InterPro" id="IPR000834">
    <property type="entry name" value="Peptidase_M14"/>
</dbReference>
<dbReference type="PANTHER" id="PTHR11705:SF147">
    <property type="entry name" value="INACTIVE METALLOCARBOXYPEPTIDASE ECM14"/>
    <property type="match status" value="1"/>
</dbReference>
<dbReference type="PANTHER" id="PTHR11705">
    <property type="entry name" value="PROTEASE FAMILY M14 CARBOXYPEPTIDASE A,B"/>
    <property type="match status" value="1"/>
</dbReference>
<dbReference type="Pfam" id="PF00246">
    <property type="entry name" value="Peptidase_M14"/>
    <property type="match status" value="1"/>
</dbReference>
<dbReference type="PRINTS" id="PR00765">
    <property type="entry name" value="CRBOXYPTASEA"/>
</dbReference>
<dbReference type="SMART" id="SM00631">
    <property type="entry name" value="Zn_pept"/>
    <property type="match status" value="1"/>
</dbReference>
<dbReference type="SUPFAM" id="SSF53187">
    <property type="entry name" value="Zn-dependent exopeptidases"/>
    <property type="match status" value="1"/>
</dbReference>
<dbReference type="PROSITE" id="PS52035">
    <property type="entry name" value="PEPTIDASE_M14"/>
    <property type="match status" value="1"/>
</dbReference>
<sequence length="607" mass="68688">MRLFTHGQVLALLAFVNTISAIPSFSTNSYPAHPAEPVSLVSQHQPQAPLGLWTRLRNSVIERVWGVPPQQRHRGGNKHQYPPFSAPASLRTRYGDDVVLRFKLQTADEVKALVEASNILFLDVWSSTDEWIDIRLAKDVVPSLLGLLPKSLQTTHVPLIRDLPQTIYESYPSPFQSSSGHERGFLPSGEPSSDATNIFFENYQPLSVIVPWMRLLASMFPSHAQFISIGSSFEGRDIPALRVGVRPANDQKPRRTLIIEGGSHAREWIGVSTVNYVAYSLITSYGKSKPISTLLEQFDFIFIPTINPDGYVYTWETDRLWRKNRQETSLPFCHGVDLDRTWGFEWNGNVTGDNPCLESYGGDKPFAGVEAHQLAEWVKEQTEQRNAKFVAFVDLHSYSQQILYPYSYSCLSQPPNLENLEELAMGIAKAIRLTNRKTYAVSSACGGLMASQKKKVKSETFLRMESTGGSALDWFYHDFGVKYAYQLKLRDRGSYGFLLPRENIVPTGNEVFNAVMMLGRFLLGKSRAFQELDWDAGFQRPNKDDKPILNDDDDDDNDDDDDDDDDADTNDDGIGRKDDSWVPDEYKGDNDRDESDGGWGFRRLRKR</sequence>
<keyword id="KW-0961">Cell wall biogenesis/degradation</keyword>
<keyword id="KW-1015">Disulfide bond</keyword>
<keyword id="KW-0325">Glycoprotein</keyword>
<keyword id="KW-0479">Metal-binding</keyword>
<keyword id="KW-1185">Reference proteome</keyword>
<keyword id="KW-0964">Secreted</keyword>
<keyword id="KW-0732">Signal</keyword>
<keyword id="KW-0926">Vacuole</keyword>
<keyword id="KW-0862">Zinc</keyword>
<feature type="signal peptide" evidence="4">
    <location>
        <begin position="1"/>
        <end position="21"/>
    </location>
</feature>
<feature type="propeptide" id="PRO_0000453229" evidence="3">
    <location>
        <begin position="22"/>
        <end position="174"/>
    </location>
</feature>
<feature type="chain" id="PRO_0000411170" description="Inactive metallocarboxypeptidase ECM14">
    <location>
        <begin position="175"/>
        <end position="607"/>
    </location>
</feature>
<feature type="domain" description="Peptidase M14" evidence="5">
    <location>
        <begin position="202"/>
        <end position="522"/>
    </location>
</feature>
<feature type="region of interest" description="Disordered" evidence="6">
    <location>
        <begin position="539"/>
        <end position="607"/>
    </location>
</feature>
<feature type="compositionally biased region" description="Acidic residues" evidence="6">
    <location>
        <begin position="550"/>
        <end position="571"/>
    </location>
</feature>
<feature type="compositionally biased region" description="Basic and acidic residues" evidence="6">
    <location>
        <begin position="573"/>
        <end position="590"/>
    </location>
</feature>
<feature type="binding site" evidence="1">
    <location>
        <begin position="264"/>
        <end position="267"/>
    </location>
    <ligand>
        <name>substrate</name>
    </ligand>
</feature>
<feature type="binding site" evidence="5">
    <location>
        <position position="264"/>
    </location>
    <ligand>
        <name>Zn(2+)</name>
        <dbReference type="ChEBI" id="CHEBI:29105"/>
        <note>catalytic</note>
    </ligand>
</feature>
<feature type="binding site" evidence="5">
    <location>
        <position position="267"/>
    </location>
    <ligand>
        <name>Zn(2+)</name>
        <dbReference type="ChEBI" id="CHEBI:29105"/>
        <note>catalytic</note>
    </ligand>
</feature>
<feature type="binding site" evidence="1">
    <location>
        <position position="322"/>
    </location>
    <ligand>
        <name>substrate</name>
    </ligand>
</feature>
<feature type="binding site" evidence="1">
    <location>
        <begin position="339"/>
        <end position="340"/>
    </location>
    <ligand>
        <name>substrate</name>
    </ligand>
</feature>
<feature type="binding site" evidence="5">
    <location>
        <position position="396"/>
    </location>
    <ligand>
        <name>Zn(2+)</name>
        <dbReference type="ChEBI" id="CHEBI:29105"/>
        <note>catalytic</note>
    </ligand>
</feature>
<feature type="binding site" evidence="1">
    <location>
        <begin position="397"/>
        <end position="398"/>
    </location>
    <ligand>
        <name>substrate</name>
    </ligand>
</feature>
<feature type="glycosylation site" description="N-linked (GlcNAc...) asparagine" evidence="4">
    <location>
        <position position="349"/>
    </location>
</feature>
<feature type="disulfide bond" evidence="2">
    <location>
        <begin position="333"/>
        <end position="356"/>
    </location>
</feature>
<accession>A6RCF5</accession>
<comment type="function">
    <text evidence="3">Inactive carboxypeptidase that may play a role in cell wall organization and biogenesis.</text>
</comment>
<comment type="cofactor">
    <cofactor evidence="1">
        <name>Zn(2+)</name>
        <dbReference type="ChEBI" id="CHEBI:29105"/>
    </cofactor>
    <text evidence="1">Binds 1 zinc ion per subunit.</text>
</comment>
<comment type="subcellular location">
    <subcellularLocation>
        <location evidence="3">Vacuole</location>
    </subcellularLocation>
    <subcellularLocation>
        <location evidence="3">Secreted</location>
    </subcellularLocation>
</comment>
<comment type="similarity">
    <text evidence="7">Belongs to the peptidase M14 family.</text>
</comment>
<comment type="caution">
    <text evidence="3">Lacks the conserved Glu residue in position 488 essential for carbopeptidase activity. The mature form lacks catalytic activity towards synthetic peptide substrates.</text>
</comment>
<protein>
    <recommendedName>
        <fullName evidence="7">Inactive metallocarboxypeptidase ECM14</fullName>
    </recommendedName>
</protein>
<organism>
    <name type="scientific">Ajellomyces capsulatus (strain NAm1 / WU24)</name>
    <name type="common">Darling's disease fungus</name>
    <name type="synonym">Histoplasma capsulatum</name>
    <dbReference type="NCBI Taxonomy" id="2059318"/>
    <lineage>
        <taxon>Eukaryota</taxon>
        <taxon>Fungi</taxon>
        <taxon>Dikarya</taxon>
        <taxon>Ascomycota</taxon>
        <taxon>Pezizomycotina</taxon>
        <taxon>Eurotiomycetes</taxon>
        <taxon>Eurotiomycetidae</taxon>
        <taxon>Onygenales</taxon>
        <taxon>Ajellomycetaceae</taxon>
        <taxon>Histoplasma</taxon>
    </lineage>
</organism>
<gene>
    <name type="primary">ECM14</name>
    <name type="ORF">HCAG_07313</name>
</gene>